<gene>
    <name type="primary">U78</name>
    <name type="synonym">EDLF5</name>
</gene>
<dbReference type="EMBL" id="U13194">
    <property type="protein sequence ID" value="AAA68469.1"/>
    <property type="molecule type" value="Genomic_DNA"/>
</dbReference>
<sequence>MNMLAYFLYCRQLLLAVVLIEFPPRLCGNTLRFYSYHLPLSTCHISDSFYLTSRTTSNLLFCHLLYCHQKSHQKSHQKKTTGYLKLFSNTIENIKNMFNSSPYTLSTTA</sequence>
<organismHost>
    <name type="scientific">Homo sapiens</name>
    <name type="common">Human</name>
    <dbReference type="NCBI Taxonomy" id="9606"/>
</organismHost>
<evidence type="ECO:0000255" key="1"/>
<name>U78_HHV6U</name>
<organism>
    <name type="scientific">Human herpesvirus 6A (strain Uganda-1102)</name>
    <name type="common">HHV-6 variant A</name>
    <name type="synonym">Human B lymphotropic virus</name>
    <dbReference type="NCBI Taxonomy" id="10370"/>
    <lineage>
        <taxon>Viruses</taxon>
        <taxon>Duplodnaviria</taxon>
        <taxon>Heunggongvirae</taxon>
        <taxon>Peploviricota</taxon>
        <taxon>Herviviricetes</taxon>
        <taxon>Herpesvirales</taxon>
        <taxon>Orthoherpesviridae</taxon>
        <taxon>Betaherpesvirinae</taxon>
        <taxon>Roseolovirus</taxon>
        <taxon>Roseolovirus humanbeta6a</taxon>
        <taxon>Human betaherpesvirus 6A</taxon>
    </lineage>
</organism>
<accession>Q89863</accession>
<accession>Q76UF9</accession>
<reference key="1">
    <citation type="journal article" date="1994" name="Virology">
        <title>Nucleotide sequence analysis of a 21-kbp region of the genome of human herpesvirus-6 containing homologues of human cytomegalovirus major immediate-early and replication genes.</title>
        <authorList>
            <person name="Nicholas J."/>
        </authorList>
    </citation>
    <scope>NUCLEOTIDE SEQUENCE [GENOMIC DNA]</scope>
</reference>
<protein>
    <recommendedName>
        <fullName>Uncharacterized protein U78</fullName>
    </recommendedName>
</protein>
<keyword id="KW-0732">Signal</keyword>
<proteinExistence type="inferred from homology"/>
<feature type="signal peptide" evidence="1">
    <location>
        <begin position="1"/>
        <end position="28"/>
    </location>
</feature>
<feature type="chain" id="PRO_0000342583" description="Uncharacterized protein U78">
    <location>
        <begin position="29"/>
        <end position="109"/>
    </location>
</feature>